<gene>
    <name evidence="1" type="primary">pnp</name>
    <name type="ordered locus">CKL_1437</name>
</gene>
<proteinExistence type="inferred from homology"/>
<evidence type="ECO:0000255" key="1">
    <source>
        <dbReference type="HAMAP-Rule" id="MF_01595"/>
    </source>
</evidence>
<evidence type="ECO:0000256" key="2">
    <source>
        <dbReference type="SAM" id="MobiDB-lite"/>
    </source>
</evidence>
<comment type="function">
    <text evidence="1">Involved in mRNA degradation. Catalyzes the phosphorolysis of single-stranded polyribonucleotides processively in the 3'- to 5'-direction.</text>
</comment>
<comment type="catalytic activity">
    <reaction evidence="1">
        <text>RNA(n+1) + phosphate = RNA(n) + a ribonucleoside 5'-diphosphate</text>
        <dbReference type="Rhea" id="RHEA:22096"/>
        <dbReference type="Rhea" id="RHEA-COMP:14527"/>
        <dbReference type="Rhea" id="RHEA-COMP:17342"/>
        <dbReference type="ChEBI" id="CHEBI:43474"/>
        <dbReference type="ChEBI" id="CHEBI:57930"/>
        <dbReference type="ChEBI" id="CHEBI:140395"/>
        <dbReference type="EC" id="2.7.7.8"/>
    </reaction>
</comment>
<comment type="cofactor">
    <cofactor evidence="1">
        <name>Mg(2+)</name>
        <dbReference type="ChEBI" id="CHEBI:18420"/>
    </cofactor>
</comment>
<comment type="subcellular location">
    <subcellularLocation>
        <location evidence="1">Cytoplasm</location>
    </subcellularLocation>
</comment>
<comment type="similarity">
    <text evidence="1">Belongs to the polyribonucleotide nucleotidyltransferase family.</text>
</comment>
<protein>
    <recommendedName>
        <fullName evidence="1">Polyribonucleotide nucleotidyltransferase</fullName>
        <ecNumber evidence="1">2.7.7.8</ecNumber>
    </recommendedName>
    <alternativeName>
        <fullName evidence="1">Polynucleotide phosphorylase</fullName>
        <shortName evidence="1">PNPase</shortName>
    </alternativeName>
</protein>
<sequence length="708" mass="78734">MNEVIQTTVAGRTLKVDCEKVGMLSNCGMLISYGDTVVLINANASDKPREGIDFFPLSIEYEERLYSVGKIPGGFIKREGKPSEKAILNARAIDRPLRPLFPKGYRNDVQVVCTVLSVDQDNLPNIVAMNGASLALCISSIPFITPVGSVAVGLVDGNFIINPNLEDREKSTLNLTVCATKERVMMVEAGACEVPEDIMYDAIIFGFEECKKIALFQEEVMKKYGKKKDEPDLYKVNEDLEEEVRGFAFDMIKDAMYIVDRDERNKVLKDIDEKLEEQFSEDYADNKSDIADVVYRVKKEIVRGMLLKEHRRVDGREFDEVRPISCEVGFLPRAHGTGLFTRGLTQVMTVVTLGSLGDVQILDGVGLEDSKRYMHHYNFPSYSTGEVRPLRGPGRREIGHGALAEKALEPLIPMEEQFPYTIRLVSEVLSSNGSTSQASICGSTLALLDAGVPIKRPAAGIAMGLVTSEDLSQEEILTDIQGLEDFFGDMDFKVGGTEKGITAIQFDTKIHGLSNKCIKETLEKARTARLYILEKMKQCIPEHRAEVSKYAPKTYIMSIPPDKIRDVIGSGGKVINKIIAETGVKIDIKEDGKIFVMSEDSEGAKKALKIIDDLTREILVGEIYLGKVTKITNFGAFVEIHKGKEGLVHISKLDFTRVNKVEDIVSVGDEILVKVIEIDNQGRINLSRKDAIKDSEKKEQNEKDVQKK</sequence>
<feature type="chain" id="PRO_1000087987" description="Polyribonucleotide nucleotidyltransferase">
    <location>
        <begin position="1"/>
        <end position="708"/>
    </location>
</feature>
<feature type="domain" description="KH" evidence="1">
    <location>
        <begin position="552"/>
        <end position="611"/>
    </location>
</feature>
<feature type="domain" description="S1 motif" evidence="1">
    <location>
        <begin position="621"/>
        <end position="689"/>
    </location>
</feature>
<feature type="region of interest" description="Disordered" evidence="2">
    <location>
        <begin position="689"/>
        <end position="708"/>
    </location>
</feature>
<feature type="binding site" evidence="1">
    <location>
        <position position="485"/>
    </location>
    <ligand>
        <name>Mg(2+)</name>
        <dbReference type="ChEBI" id="CHEBI:18420"/>
    </ligand>
</feature>
<feature type="binding site" evidence="1">
    <location>
        <position position="491"/>
    </location>
    <ligand>
        <name>Mg(2+)</name>
        <dbReference type="ChEBI" id="CHEBI:18420"/>
    </ligand>
</feature>
<reference key="1">
    <citation type="journal article" date="2008" name="Proc. Natl. Acad. Sci. U.S.A.">
        <title>The genome of Clostridium kluyveri, a strict anaerobe with unique metabolic features.</title>
        <authorList>
            <person name="Seedorf H."/>
            <person name="Fricke W.F."/>
            <person name="Veith B."/>
            <person name="Brueggemann H."/>
            <person name="Liesegang H."/>
            <person name="Strittmatter A."/>
            <person name="Miethke M."/>
            <person name="Buckel W."/>
            <person name="Hinderberger J."/>
            <person name="Li F."/>
            <person name="Hagemeier C."/>
            <person name="Thauer R.K."/>
            <person name="Gottschalk G."/>
        </authorList>
    </citation>
    <scope>NUCLEOTIDE SEQUENCE [LARGE SCALE GENOMIC DNA]</scope>
    <source>
        <strain>ATCC 8527 / DSM 555 / NBRC 12016 / NCIMB 10680 / K1</strain>
    </source>
</reference>
<name>PNP_CLOK5</name>
<accession>A5N848</accession>
<keyword id="KW-0963">Cytoplasm</keyword>
<keyword id="KW-0460">Magnesium</keyword>
<keyword id="KW-0479">Metal-binding</keyword>
<keyword id="KW-0548">Nucleotidyltransferase</keyword>
<keyword id="KW-1185">Reference proteome</keyword>
<keyword id="KW-0694">RNA-binding</keyword>
<keyword id="KW-0808">Transferase</keyword>
<organism>
    <name type="scientific">Clostridium kluyveri (strain ATCC 8527 / DSM 555 / NBRC 12016 / NCIMB 10680 / K1)</name>
    <dbReference type="NCBI Taxonomy" id="431943"/>
    <lineage>
        <taxon>Bacteria</taxon>
        <taxon>Bacillati</taxon>
        <taxon>Bacillota</taxon>
        <taxon>Clostridia</taxon>
        <taxon>Eubacteriales</taxon>
        <taxon>Clostridiaceae</taxon>
        <taxon>Clostridium</taxon>
    </lineage>
</organism>
<dbReference type="EC" id="2.7.7.8" evidence="1"/>
<dbReference type="EMBL" id="CP000673">
    <property type="protein sequence ID" value="EDK33479.1"/>
    <property type="molecule type" value="Genomic_DNA"/>
</dbReference>
<dbReference type="RefSeq" id="WP_012101826.1">
    <property type="nucleotide sequence ID" value="NC_009706.1"/>
</dbReference>
<dbReference type="SMR" id="A5N848"/>
<dbReference type="STRING" id="431943.CKL_1437"/>
<dbReference type="KEGG" id="ckl:CKL_1437"/>
<dbReference type="eggNOG" id="COG1185">
    <property type="taxonomic scope" value="Bacteria"/>
</dbReference>
<dbReference type="HOGENOM" id="CLU_004217_2_2_9"/>
<dbReference type="Proteomes" id="UP000002411">
    <property type="component" value="Chromosome"/>
</dbReference>
<dbReference type="GO" id="GO:0005829">
    <property type="term" value="C:cytosol"/>
    <property type="evidence" value="ECO:0007669"/>
    <property type="project" value="TreeGrafter"/>
</dbReference>
<dbReference type="GO" id="GO:0000175">
    <property type="term" value="F:3'-5'-RNA exonuclease activity"/>
    <property type="evidence" value="ECO:0007669"/>
    <property type="project" value="TreeGrafter"/>
</dbReference>
<dbReference type="GO" id="GO:0000287">
    <property type="term" value="F:magnesium ion binding"/>
    <property type="evidence" value="ECO:0007669"/>
    <property type="project" value="UniProtKB-UniRule"/>
</dbReference>
<dbReference type="GO" id="GO:0004654">
    <property type="term" value="F:polyribonucleotide nucleotidyltransferase activity"/>
    <property type="evidence" value="ECO:0007669"/>
    <property type="project" value="UniProtKB-UniRule"/>
</dbReference>
<dbReference type="GO" id="GO:0003723">
    <property type="term" value="F:RNA binding"/>
    <property type="evidence" value="ECO:0007669"/>
    <property type="project" value="UniProtKB-UniRule"/>
</dbReference>
<dbReference type="GO" id="GO:0006402">
    <property type="term" value="P:mRNA catabolic process"/>
    <property type="evidence" value="ECO:0007669"/>
    <property type="project" value="UniProtKB-UniRule"/>
</dbReference>
<dbReference type="GO" id="GO:0006396">
    <property type="term" value="P:RNA processing"/>
    <property type="evidence" value="ECO:0007669"/>
    <property type="project" value="InterPro"/>
</dbReference>
<dbReference type="CDD" id="cd02393">
    <property type="entry name" value="KH-I_PNPase"/>
    <property type="match status" value="1"/>
</dbReference>
<dbReference type="CDD" id="cd11363">
    <property type="entry name" value="RNase_PH_PNPase_1"/>
    <property type="match status" value="1"/>
</dbReference>
<dbReference type="CDD" id="cd11364">
    <property type="entry name" value="RNase_PH_PNPase_2"/>
    <property type="match status" value="1"/>
</dbReference>
<dbReference type="CDD" id="cd04472">
    <property type="entry name" value="S1_PNPase"/>
    <property type="match status" value="1"/>
</dbReference>
<dbReference type="FunFam" id="2.40.50.140:FF:000023">
    <property type="entry name" value="Polyribonucleotide nucleotidyltransferase"/>
    <property type="match status" value="1"/>
</dbReference>
<dbReference type="FunFam" id="3.30.1370.10:FF:000001">
    <property type="entry name" value="Polyribonucleotide nucleotidyltransferase"/>
    <property type="match status" value="1"/>
</dbReference>
<dbReference type="FunFam" id="3.30.230.70:FF:000001">
    <property type="entry name" value="Polyribonucleotide nucleotidyltransferase"/>
    <property type="match status" value="1"/>
</dbReference>
<dbReference type="FunFam" id="3.30.230.70:FF:000002">
    <property type="entry name" value="Polyribonucleotide nucleotidyltransferase"/>
    <property type="match status" value="1"/>
</dbReference>
<dbReference type="Gene3D" id="3.30.230.70">
    <property type="entry name" value="GHMP Kinase, N-terminal domain"/>
    <property type="match status" value="2"/>
</dbReference>
<dbReference type="Gene3D" id="3.30.1370.10">
    <property type="entry name" value="K Homology domain, type 1"/>
    <property type="match status" value="1"/>
</dbReference>
<dbReference type="Gene3D" id="2.40.50.140">
    <property type="entry name" value="Nucleic acid-binding proteins"/>
    <property type="match status" value="1"/>
</dbReference>
<dbReference type="HAMAP" id="MF_01595">
    <property type="entry name" value="PNPase"/>
    <property type="match status" value="1"/>
</dbReference>
<dbReference type="InterPro" id="IPR001247">
    <property type="entry name" value="ExoRNase_PH_dom1"/>
</dbReference>
<dbReference type="InterPro" id="IPR015847">
    <property type="entry name" value="ExoRNase_PH_dom2"/>
</dbReference>
<dbReference type="InterPro" id="IPR036345">
    <property type="entry name" value="ExoRNase_PH_dom2_sf"/>
</dbReference>
<dbReference type="InterPro" id="IPR004087">
    <property type="entry name" value="KH_dom"/>
</dbReference>
<dbReference type="InterPro" id="IPR004088">
    <property type="entry name" value="KH_dom_type_1"/>
</dbReference>
<dbReference type="InterPro" id="IPR036612">
    <property type="entry name" value="KH_dom_type_1_sf"/>
</dbReference>
<dbReference type="InterPro" id="IPR012340">
    <property type="entry name" value="NA-bd_OB-fold"/>
</dbReference>
<dbReference type="InterPro" id="IPR012162">
    <property type="entry name" value="PNPase"/>
</dbReference>
<dbReference type="InterPro" id="IPR027408">
    <property type="entry name" value="PNPase/RNase_PH_dom_sf"/>
</dbReference>
<dbReference type="InterPro" id="IPR015848">
    <property type="entry name" value="PNPase_PH_RNA-bd_bac/org-type"/>
</dbReference>
<dbReference type="InterPro" id="IPR036456">
    <property type="entry name" value="PNPase_PH_RNA-bd_sf"/>
</dbReference>
<dbReference type="InterPro" id="IPR020568">
    <property type="entry name" value="Ribosomal_Su5_D2-typ_SF"/>
</dbReference>
<dbReference type="InterPro" id="IPR003029">
    <property type="entry name" value="S1_domain"/>
</dbReference>
<dbReference type="NCBIfam" id="TIGR03591">
    <property type="entry name" value="polynuc_phos"/>
    <property type="match status" value="1"/>
</dbReference>
<dbReference type="NCBIfam" id="NF008805">
    <property type="entry name" value="PRK11824.1"/>
    <property type="match status" value="1"/>
</dbReference>
<dbReference type="PANTHER" id="PTHR11252">
    <property type="entry name" value="POLYRIBONUCLEOTIDE NUCLEOTIDYLTRANSFERASE"/>
    <property type="match status" value="1"/>
</dbReference>
<dbReference type="PANTHER" id="PTHR11252:SF0">
    <property type="entry name" value="POLYRIBONUCLEOTIDE NUCLEOTIDYLTRANSFERASE 1, MITOCHONDRIAL"/>
    <property type="match status" value="1"/>
</dbReference>
<dbReference type="Pfam" id="PF00013">
    <property type="entry name" value="KH_1"/>
    <property type="match status" value="1"/>
</dbReference>
<dbReference type="Pfam" id="PF03726">
    <property type="entry name" value="PNPase"/>
    <property type="match status" value="1"/>
</dbReference>
<dbReference type="Pfam" id="PF01138">
    <property type="entry name" value="RNase_PH"/>
    <property type="match status" value="2"/>
</dbReference>
<dbReference type="Pfam" id="PF03725">
    <property type="entry name" value="RNase_PH_C"/>
    <property type="match status" value="1"/>
</dbReference>
<dbReference type="Pfam" id="PF00575">
    <property type="entry name" value="S1"/>
    <property type="match status" value="1"/>
</dbReference>
<dbReference type="PIRSF" id="PIRSF005499">
    <property type="entry name" value="PNPase"/>
    <property type="match status" value="1"/>
</dbReference>
<dbReference type="SMART" id="SM00322">
    <property type="entry name" value="KH"/>
    <property type="match status" value="1"/>
</dbReference>
<dbReference type="SMART" id="SM00316">
    <property type="entry name" value="S1"/>
    <property type="match status" value="1"/>
</dbReference>
<dbReference type="SUPFAM" id="SSF54791">
    <property type="entry name" value="Eukaryotic type KH-domain (KH-domain type I)"/>
    <property type="match status" value="1"/>
</dbReference>
<dbReference type="SUPFAM" id="SSF50249">
    <property type="entry name" value="Nucleic acid-binding proteins"/>
    <property type="match status" value="1"/>
</dbReference>
<dbReference type="SUPFAM" id="SSF46915">
    <property type="entry name" value="Polynucleotide phosphorylase/guanosine pentaphosphate synthase (PNPase/GPSI), domain 3"/>
    <property type="match status" value="1"/>
</dbReference>
<dbReference type="SUPFAM" id="SSF55666">
    <property type="entry name" value="Ribonuclease PH domain 2-like"/>
    <property type="match status" value="2"/>
</dbReference>
<dbReference type="SUPFAM" id="SSF54211">
    <property type="entry name" value="Ribosomal protein S5 domain 2-like"/>
    <property type="match status" value="2"/>
</dbReference>
<dbReference type="PROSITE" id="PS50084">
    <property type="entry name" value="KH_TYPE_1"/>
    <property type="match status" value="1"/>
</dbReference>
<dbReference type="PROSITE" id="PS50126">
    <property type="entry name" value="S1"/>
    <property type="match status" value="1"/>
</dbReference>